<protein>
    <recommendedName>
        <fullName>Turripeptide Lol6.1</fullName>
    </recommendedName>
    <alternativeName>
        <fullName>OL38</fullName>
    </alternativeName>
</protein>
<accession>P0DKM3</accession>
<sequence length="82" mass="9170">MRFHWIPTLTVLLVLSMSFGTEAIPXXXXXXXXXXXXXXXXXXXXXXXSEVLECYFECGNWEGTCCDTGICVGIHNCKIPEN</sequence>
<feature type="signal peptide" evidence="2">
    <location>
        <begin position="1"/>
        <end position="23"/>
    </location>
</feature>
<feature type="propeptide" id="PRO_0000419836" evidence="2">
    <location>
        <begin position="24"/>
        <end position="48"/>
    </location>
</feature>
<feature type="chain" id="PRO_0000419837" description="Turripeptide Lol6.1">
    <location>
        <begin position="49"/>
        <end position="82"/>
    </location>
</feature>
<feature type="disulfide bond" evidence="1">
    <location>
        <begin position="54"/>
        <end position="66"/>
    </location>
</feature>
<feature type="disulfide bond" evidence="1">
    <location>
        <begin position="58"/>
        <end position="71"/>
    </location>
</feature>
<feature type="disulfide bond" evidence="1">
    <location>
        <begin position="65"/>
        <end position="77"/>
    </location>
</feature>
<keyword id="KW-1015">Disulfide bond</keyword>
<keyword id="KW-0872">Ion channel impairing toxin</keyword>
<keyword id="KW-0960">Knottin</keyword>
<keyword id="KW-0528">Neurotoxin</keyword>
<keyword id="KW-0964">Secreted</keyword>
<keyword id="KW-0732">Signal</keyword>
<keyword id="KW-0800">Toxin</keyword>
<name>TU61_IOTOL</name>
<dbReference type="GO" id="GO:0005576">
    <property type="term" value="C:extracellular region"/>
    <property type="evidence" value="ECO:0007669"/>
    <property type="project" value="UniProtKB-SubCell"/>
</dbReference>
<dbReference type="GO" id="GO:0099106">
    <property type="term" value="F:ion channel regulator activity"/>
    <property type="evidence" value="ECO:0007669"/>
    <property type="project" value="UniProtKB-KW"/>
</dbReference>
<dbReference type="GO" id="GO:0090729">
    <property type="term" value="F:toxin activity"/>
    <property type="evidence" value="ECO:0007669"/>
    <property type="project" value="UniProtKB-KW"/>
</dbReference>
<proteinExistence type="evidence at transcript level"/>
<comment type="function">
    <text evidence="1">Acts as a neurotoxin by inhibiting an ion channel.</text>
</comment>
<comment type="subcellular location">
    <subcellularLocation>
        <location evidence="1">Secreted</location>
    </subcellularLocation>
</comment>
<comment type="tissue specificity">
    <text>Expressed by the venom duct.</text>
</comment>
<comment type="domain">
    <text>The cysteine framework is VI/VII (C-C-CC-C-C).</text>
</comment>
<comment type="domain">
    <text evidence="1">The presence of a 'disulfide through disulfide knot' structurally defines this protein as a knottin.</text>
</comment>
<reference key="1">
    <citation type="journal article" date="2006" name="J. Mol. Evol.">
        <title>Genes expressed in a turrid venom duct: divergence and similarity to conotoxins.</title>
        <authorList>
            <person name="Watkins M."/>
            <person name="Hillyard D.R."/>
            <person name="Olivera B.M."/>
        </authorList>
    </citation>
    <scope>NUCLEOTIDE SEQUENCE [MRNA]</scope>
    <source>
        <tissue>Venom duct</tissue>
    </source>
</reference>
<organism>
    <name type="scientific">Iotyrris olangoensis</name>
    <name type="common">Sea snail</name>
    <name type="synonym">Lophiotoma olangoensis</name>
    <dbReference type="NCBI Taxonomy" id="2420066"/>
    <lineage>
        <taxon>Eukaryota</taxon>
        <taxon>Metazoa</taxon>
        <taxon>Spiralia</taxon>
        <taxon>Lophotrochozoa</taxon>
        <taxon>Mollusca</taxon>
        <taxon>Gastropoda</taxon>
        <taxon>Caenogastropoda</taxon>
        <taxon>Neogastropoda</taxon>
        <taxon>Conoidea</taxon>
        <taxon>Turridae</taxon>
        <taxon>Iotyrris</taxon>
    </lineage>
</organism>
<evidence type="ECO:0000250" key="1"/>
<evidence type="ECO:0000255" key="2"/>